<evidence type="ECO:0000255" key="1">
    <source>
        <dbReference type="HAMAP-Rule" id="MF_00416"/>
    </source>
</evidence>
<proteinExistence type="inferred from homology"/>
<dbReference type="EMBL" id="CP000133">
    <property type="protein sequence ID" value="ABC89479.1"/>
    <property type="molecule type" value="Genomic_DNA"/>
</dbReference>
<dbReference type="RefSeq" id="WP_011424028.1">
    <property type="nucleotide sequence ID" value="NC_007761.1"/>
</dbReference>
<dbReference type="SMR" id="Q2KCF7"/>
<dbReference type="KEGG" id="ret:RHE_CH00663"/>
<dbReference type="eggNOG" id="COG1706">
    <property type="taxonomic scope" value="Bacteria"/>
</dbReference>
<dbReference type="HOGENOM" id="CLU_045235_1_0_5"/>
<dbReference type="OrthoDB" id="9786431at2"/>
<dbReference type="Proteomes" id="UP000001936">
    <property type="component" value="Chromosome"/>
</dbReference>
<dbReference type="GO" id="GO:0009428">
    <property type="term" value="C:bacterial-type flagellum basal body, distal rod, P ring"/>
    <property type="evidence" value="ECO:0007669"/>
    <property type="project" value="InterPro"/>
</dbReference>
<dbReference type="GO" id="GO:0030288">
    <property type="term" value="C:outer membrane-bounded periplasmic space"/>
    <property type="evidence" value="ECO:0007669"/>
    <property type="project" value="InterPro"/>
</dbReference>
<dbReference type="GO" id="GO:0005198">
    <property type="term" value="F:structural molecule activity"/>
    <property type="evidence" value="ECO:0007669"/>
    <property type="project" value="InterPro"/>
</dbReference>
<dbReference type="GO" id="GO:0071973">
    <property type="term" value="P:bacterial-type flagellum-dependent cell motility"/>
    <property type="evidence" value="ECO:0007669"/>
    <property type="project" value="InterPro"/>
</dbReference>
<dbReference type="HAMAP" id="MF_00416">
    <property type="entry name" value="FlgI"/>
    <property type="match status" value="1"/>
</dbReference>
<dbReference type="InterPro" id="IPR001782">
    <property type="entry name" value="Flag_FlgI"/>
</dbReference>
<dbReference type="NCBIfam" id="NF003676">
    <property type="entry name" value="PRK05303.1"/>
    <property type="match status" value="1"/>
</dbReference>
<dbReference type="PANTHER" id="PTHR30381">
    <property type="entry name" value="FLAGELLAR P-RING PERIPLASMIC PROTEIN FLGI"/>
    <property type="match status" value="1"/>
</dbReference>
<dbReference type="PANTHER" id="PTHR30381:SF0">
    <property type="entry name" value="FLAGELLAR P-RING PROTEIN"/>
    <property type="match status" value="1"/>
</dbReference>
<dbReference type="Pfam" id="PF02119">
    <property type="entry name" value="FlgI"/>
    <property type="match status" value="1"/>
</dbReference>
<dbReference type="PRINTS" id="PR01010">
    <property type="entry name" value="FLGPRINGFLGI"/>
</dbReference>
<name>FLGI_RHIEC</name>
<gene>
    <name evidence="1" type="primary">flgI</name>
    <name type="ordered locus">RHE_CH00663</name>
</gene>
<reference key="1">
    <citation type="journal article" date="2006" name="Proc. Natl. Acad. Sci. U.S.A.">
        <title>The partitioned Rhizobium etli genome: genetic and metabolic redundancy in seven interacting replicons.</title>
        <authorList>
            <person name="Gonzalez V."/>
            <person name="Santamaria R.I."/>
            <person name="Bustos P."/>
            <person name="Hernandez-Gonzalez I."/>
            <person name="Medrano-Soto A."/>
            <person name="Moreno-Hagelsieb G."/>
            <person name="Janga S.C."/>
            <person name="Ramirez M.A."/>
            <person name="Jimenez-Jacinto V."/>
            <person name="Collado-Vides J."/>
            <person name="Davila G."/>
        </authorList>
    </citation>
    <scope>NUCLEOTIDE SEQUENCE [LARGE SCALE GENOMIC DNA]</scope>
    <source>
        <strain>ATCC 51251 / DSM 11541 / JCM 21823 / NBRC 15573 / CFN 42</strain>
    </source>
</reference>
<protein>
    <recommendedName>
        <fullName evidence="1">Flagellar P-ring protein</fullName>
    </recommendedName>
    <alternativeName>
        <fullName evidence="1">Basal body P-ring protein</fullName>
    </alternativeName>
</protein>
<comment type="function">
    <text evidence="1">Assembles around the rod to form the L-ring and probably protects the motor/basal body from shearing forces during rotation.</text>
</comment>
<comment type="subunit">
    <text evidence="1">The basal body constitutes a major portion of the flagellar organelle and consists of four rings (L,P,S, and M) mounted on a central rod.</text>
</comment>
<comment type="subcellular location">
    <subcellularLocation>
        <location evidence="1">Periplasm</location>
    </subcellularLocation>
    <subcellularLocation>
        <location evidence="1">Bacterial flagellum basal body</location>
    </subcellularLocation>
</comment>
<comment type="similarity">
    <text evidence="1">Belongs to the FlgI family.</text>
</comment>
<feature type="signal peptide" evidence="1">
    <location>
        <begin position="1"/>
        <end position="26"/>
    </location>
</feature>
<feature type="chain" id="PRO_1000050116" description="Flagellar P-ring protein">
    <location>
        <begin position="27"/>
        <end position="373"/>
    </location>
</feature>
<sequence>MKLFFRIVTLVAVVAMSLADMAPAWALTSRIKDIASLQAGRDNQLIGYGLIVGLQGTGDGFRSSPFTEQSMRAMLQNLGISTQGGQSNAKNTAAVMVTANLPPFASPGSRLDVTVSSLGDATSLRGGTLVMTSLSGADGQIYAVAQGSVIVSGFQAQGQAATVTEGVTTAGRVPGGAIIERELPSHFKDSVNLVLQLRNPDFSTAIRIADIVNGYASARFGGPVAEAKDSQEVVIQKPRTADLTRLMADVENLIVETDTPAKVVINERTGTIVIGSDVRVSPVAVSYGTLTVQVTETPQIIQPEPFSRGRTAVQPQTDIAAEQTGGRVAIIDGPDLRTLVAGLNNIGVKPDGIIAILQGIKSAGALQAELVLQ</sequence>
<organism>
    <name type="scientific">Rhizobium etli (strain ATCC 51251 / DSM 11541 / JCM 21823 / NBRC 15573 / CFN 42)</name>
    <dbReference type="NCBI Taxonomy" id="347834"/>
    <lineage>
        <taxon>Bacteria</taxon>
        <taxon>Pseudomonadati</taxon>
        <taxon>Pseudomonadota</taxon>
        <taxon>Alphaproteobacteria</taxon>
        <taxon>Hyphomicrobiales</taxon>
        <taxon>Rhizobiaceae</taxon>
        <taxon>Rhizobium/Agrobacterium group</taxon>
        <taxon>Rhizobium</taxon>
    </lineage>
</organism>
<accession>Q2KCF7</accession>
<keyword id="KW-0975">Bacterial flagellum</keyword>
<keyword id="KW-0574">Periplasm</keyword>
<keyword id="KW-1185">Reference proteome</keyword>
<keyword id="KW-0732">Signal</keyword>